<organism evidence="11">
    <name type="scientific">Anopheles gambiae</name>
    <name type="common">African malaria mosquito</name>
    <dbReference type="NCBI Taxonomy" id="7165"/>
    <lineage>
        <taxon>Eukaryota</taxon>
        <taxon>Metazoa</taxon>
        <taxon>Ecdysozoa</taxon>
        <taxon>Arthropoda</taxon>
        <taxon>Hexapoda</taxon>
        <taxon>Insecta</taxon>
        <taxon>Pterygota</taxon>
        <taxon>Neoptera</taxon>
        <taxon>Endopterygota</taxon>
        <taxon>Diptera</taxon>
        <taxon>Nematocera</taxon>
        <taxon>Culicoidea</taxon>
        <taxon>Culicidae</taxon>
        <taxon>Anophelinae</taxon>
        <taxon>Anopheles</taxon>
    </lineage>
</organism>
<evidence type="ECO:0000255" key="1"/>
<evidence type="ECO:0000256" key="2">
    <source>
        <dbReference type="SAM" id="MobiDB-lite"/>
    </source>
</evidence>
<evidence type="ECO:0000269" key="3">
    <source>
    </source>
</evidence>
<evidence type="ECO:0000269" key="4">
    <source>
    </source>
</evidence>
<evidence type="ECO:0000269" key="5">
    <source>
    </source>
</evidence>
<evidence type="ECO:0000303" key="6">
    <source>
    </source>
</evidence>
<evidence type="ECO:0000303" key="7">
    <source>
    </source>
</evidence>
<evidence type="ECO:0000303" key="8">
    <source>
    </source>
</evidence>
<evidence type="ECO:0000305" key="9"/>
<evidence type="ECO:0000312" key="10">
    <source>
        <dbReference type="EMBL" id="CAA76832.1"/>
    </source>
</evidence>
<evidence type="ECO:0000312" key="11">
    <source>
        <dbReference type="EMBL" id="EAA12433.3"/>
    </source>
</evidence>
<evidence type="ECO:0000312" key="12">
    <source>
        <dbReference type="Proteomes" id="UP000007062"/>
    </source>
</evidence>
<evidence type="ECO:0007744" key="13">
    <source>
        <dbReference type="PDB" id="5NHU"/>
    </source>
</evidence>
<evidence type="ECO:0007829" key="14">
    <source>
        <dbReference type="PDB" id="5NHU"/>
    </source>
</evidence>
<gene>
    <name evidence="11" type="ORF">AgaP_AGAP008004</name>
</gene>
<comment type="function">
    <text evidence="3 4 5">Salivary protein with anticoagulant activity that inhibits host thrombin (F2); binds to the proteinase in a reverse orientation (opposite to substrates).</text>
</comment>
<comment type="activity regulation">
    <text evidence="3">Increasing concentration of NaCl decreases affinity for thrombin.</text>
</comment>
<comment type="subunit">
    <text evidence="5">Interacts with human F2 (thrombin); the interaction results in thrombin inhibition.</text>
</comment>
<comment type="subcellular location">
    <subcellularLocation>
        <location evidence="9">Secreted</location>
    </subcellularLocation>
</comment>
<comment type="tissue specificity">
    <text evidence="3">Female salivary gland (at protein level) (PubMed:22617725). Not detected in female midgut, head, carcass and male tissues (at protein level) (PubMed:22617725).</text>
</comment>
<comment type="miscellaneous">
    <text evidence="3">Does not inhibit host coagulation factor Xa (F10), factor XIa (F11), factor XIIa (F12), kallikrein, chymase, trypsin, chymotrypsin, elastase, tryptase, cathepsin G (CTSG), plasmin (PLG), urokinase-type plasminogen activator (PLAU), tissue plasminogen activator (PLAT) and matriptase.</text>
</comment>
<comment type="similarity">
    <text evidence="9">Belongs to the anophelin family.</text>
</comment>
<sequence>MASKLFVLAFLCLALVVVVQSAPQYARGDVPTYDEEDFDEESLKPHSSSSSDDGEEEFDPSLLEEHADAPTARDPGRNPEFLRNSNTDEQASAPAASSSESDE</sequence>
<proteinExistence type="evidence at protein level"/>
<feature type="signal peptide" evidence="1">
    <location>
        <begin position="1"/>
        <end position="21"/>
    </location>
</feature>
<feature type="chain" id="PRO_5014588128" description="Salivary thrombin inhibitor anophelin" evidence="1">
    <location>
        <begin position="22"/>
        <end position="103"/>
    </location>
</feature>
<feature type="region of interest" description="Disordered" evidence="2">
    <location>
        <begin position="24"/>
        <end position="103"/>
    </location>
</feature>
<feature type="region of interest" description="Blocks exosite I of host thrombin" evidence="5 13">
    <location>
        <begin position="56"/>
        <end position="68"/>
    </location>
</feature>
<feature type="region of interest" description="Blocks active site cleft of host thrombin in a reverse direction compared to substrates" evidence="5 13">
    <location>
        <begin position="74"/>
        <end position="77"/>
    </location>
</feature>
<feature type="compositionally biased region" description="Low complexity" evidence="2">
    <location>
        <begin position="91"/>
        <end position="103"/>
    </location>
</feature>
<feature type="sequence conflict" description="In Ref. 3; CAA76832." evidence="9" ref="3">
    <original>S</original>
    <variation>P</variation>
    <location>
        <position position="50"/>
    </location>
</feature>
<feature type="sequence conflict" description="In Ref. 3; CAA76832." evidence="9" ref="3">
    <original>ESDE</original>
    <variation>DS</variation>
    <location>
        <begin position="100"/>
        <end position="103"/>
    </location>
</feature>
<feature type="helix" evidence="14">
    <location>
        <begin position="60"/>
        <end position="62"/>
    </location>
</feature>
<feature type="turn" evidence="14">
    <location>
        <begin position="75"/>
        <end position="77"/>
    </location>
</feature>
<feature type="helix" evidence="14">
    <location>
        <begin position="80"/>
        <end position="82"/>
    </location>
</feature>
<name>SATPA_ANOGA</name>
<accession>Q7Q3R9</accession>
<accession>O97416</accession>
<keyword id="KW-0002">3D-structure</keyword>
<keyword id="KW-1203">Blood coagulation cascade inhibiting toxin</keyword>
<keyword id="KW-1199">Hemostasis impairing toxin</keyword>
<keyword id="KW-1185">Reference proteome</keyword>
<keyword id="KW-0964">Secreted</keyword>
<keyword id="KW-0732">Signal</keyword>
<keyword id="KW-0800">Toxin</keyword>
<reference evidence="12" key="1">
    <citation type="journal article" date="2002" name="Science">
        <title>The genome sequence of the malaria mosquito Anopheles gambiae.</title>
        <authorList>
            <person name="Holt R.A."/>
            <person name="Subramanian G.M."/>
            <person name="Halpern A."/>
            <person name="Sutton G.G."/>
            <person name="Charlab R."/>
            <person name="Nusskern D.R."/>
            <person name="Wincker P."/>
            <person name="Clark A.G."/>
            <person name="Ribeiro J.M.C."/>
            <person name="Wides R."/>
            <person name="Salzberg S.L."/>
            <person name="Loftus B.J."/>
            <person name="Yandell M.D."/>
            <person name="Majoros W.H."/>
            <person name="Rusch D.B."/>
            <person name="Lai Z."/>
            <person name="Kraft C.L."/>
            <person name="Abril J.F."/>
            <person name="Anthouard V."/>
            <person name="Arensburger P."/>
            <person name="Atkinson P.W."/>
            <person name="Baden H."/>
            <person name="de Berardinis V."/>
            <person name="Baldwin D."/>
            <person name="Benes V."/>
            <person name="Biedler J."/>
            <person name="Blass C."/>
            <person name="Bolanos R."/>
            <person name="Boscus D."/>
            <person name="Barnstead M."/>
            <person name="Cai S."/>
            <person name="Center A."/>
            <person name="Chaturverdi K."/>
            <person name="Christophides G.K."/>
            <person name="Chrystal M.A.M."/>
            <person name="Clamp M."/>
            <person name="Cravchik A."/>
            <person name="Curwen V."/>
            <person name="Dana A."/>
            <person name="Delcher A."/>
            <person name="Dew I."/>
            <person name="Evans C.A."/>
            <person name="Flanigan M."/>
            <person name="Grundschober-Freimoser A."/>
            <person name="Friedli L."/>
            <person name="Gu Z."/>
            <person name="Guan P."/>
            <person name="Guigo R."/>
            <person name="Hillenmeyer M.E."/>
            <person name="Hladun S.L."/>
            <person name="Hogan J.R."/>
            <person name="Hong Y.S."/>
            <person name="Hoover J."/>
            <person name="Jaillon O."/>
            <person name="Ke Z."/>
            <person name="Kodira C.D."/>
            <person name="Kokoza E."/>
            <person name="Koutsos A."/>
            <person name="Letunic I."/>
            <person name="Levitsky A.A."/>
            <person name="Liang Y."/>
            <person name="Lin J.-J."/>
            <person name="Lobo N.F."/>
            <person name="Lopez J.R."/>
            <person name="Malek J.A."/>
            <person name="McIntosh T.C."/>
            <person name="Meister S."/>
            <person name="Miller J.R."/>
            <person name="Mobarry C."/>
            <person name="Mongin E."/>
            <person name="Murphy S.D."/>
            <person name="O'Brochta D.A."/>
            <person name="Pfannkoch C."/>
            <person name="Qi R."/>
            <person name="Regier M.A."/>
            <person name="Remington K."/>
            <person name="Shao H."/>
            <person name="Sharakhova M.V."/>
            <person name="Sitter C.D."/>
            <person name="Shetty J."/>
            <person name="Smith T.J."/>
            <person name="Strong R."/>
            <person name="Sun J."/>
            <person name="Thomasova D."/>
            <person name="Ton L.Q."/>
            <person name="Topalis P."/>
            <person name="Tu Z.J."/>
            <person name="Unger M.F."/>
            <person name="Walenz B."/>
            <person name="Wang A.H."/>
            <person name="Wang J."/>
            <person name="Wang M."/>
            <person name="Wang X."/>
            <person name="Woodford K.J."/>
            <person name="Wortman J.R."/>
            <person name="Wu M."/>
            <person name="Yao A."/>
            <person name="Zdobnov E.M."/>
            <person name="Zhang H."/>
            <person name="Zhao Q."/>
            <person name="Zhao S."/>
            <person name="Zhu S.C."/>
            <person name="Zhimulev I."/>
            <person name="Coluzzi M."/>
            <person name="della Torre A."/>
            <person name="Roth C.W."/>
            <person name="Louis C."/>
            <person name="Kalush F."/>
            <person name="Mural R.J."/>
            <person name="Myers E.W."/>
            <person name="Adams M.D."/>
            <person name="Smith H.O."/>
            <person name="Broder S."/>
            <person name="Gardner M.J."/>
            <person name="Fraser C.M."/>
            <person name="Birney E."/>
            <person name="Bork P."/>
            <person name="Brey P.T."/>
            <person name="Venter J.C."/>
            <person name="Weissenbach J."/>
            <person name="Kafatos F.C."/>
            <person name="Collins F.H."/>
            <person name="Hoffman S.L."/>
        </authorList>
    </citation>
    <scope>NUCLEOTIDE SEQUENCE [LARGE SCALE GENOMIC DNA]</scope>
    <source>
        <strain evidence="12">PEST</strain>
    </source>
</reference>
<reference evidence="11" key="2">
    <citation type="journal article" date="2007" name="Genome Biol.">
        <title>Update of the Anopheles gambiae PEST genome assembly.</title>
        <authorList>
            <person name="Sharakhova M.V."/>
            <person name="Hammond M.P."/>
            <person name="Lobo N.F."/>
            <person name="Krzywinski J."/>
            <person name="Unger M.F."/>
            <person name="Hillenmeyer M.E."/>
            <person name="Bruggner R.V."/>
            <person name="Birney E."/>
            <person name="Collins F.H."/>
        </authorList>
    </citation>
    <scope>NUCLEOTIDE SEQUENCE [LARGE SCALE GENOMIC DNA]</scope>
    <source>
        <strain evidence="11">PEST</strain>
    </source>
</reference>
<reference evidence="10" key="3">
    <citation type="journal article" date="1999" name="Proc. Natl. Acad. Sci. U.S.A.">
        <title>Trapping cDNAs encoding secreted proteins from the salivary glands of the malaria vector Anopheles gambiae.</title>
        <authorList>
            <person name="Arca B."/>
            <person name="Lombardo F."/>
            <person name="de Lara Capurro M."/>
            <person name="della Torre A."/>
            <person name="Dimopoulos G."/>
            <person name="James A.A."/>
            <person name="Coluzzi M."/>
        </authorList>
    </citation>
    <scope>NUCLEOTIDE SEQUENCE [LARGE SCALE MRNA]</scope>
    <source>
        <strain evidence="10">Gasua</strain>
        <tissue evidence="10">Salivary gland</tissue>
    </source>
</reference>
<reference evidence="9" key="4">
    <citation type="journal article" date="2012" name="Insect Biochem. Mol. Biol.">
        <title>The Anopheles gambiae cE5, a tight- and fast-binding thrombin inhibitor with post-transcriptionally regulated salivary-restricted expression.</title>
        <authorList>
            <person name="Ronca R."/>
            <person name="Kotsyfakis M."/>
            <person name="Lombardo F."/>
            <person name="Rizzo C."/>
            <person name="Curra C."/>
            <person name="Ponzi M."/>
            <person name="Fiorentino G."/>
            <person name="Ribeiro J.M."/>
            <person name="Arca B."/>
        </authorList>
    </citation>
    <scope>FUNCTION</scope>
    <scope>ACTIVITY REGULATION</scope>
    <scope>TISSUE SPECIFICITY</scope>
</reference>
<reference evidence="9" key="5">
    <citation type="journal article" date="2012" name="Proc. Natl. Acad. Sci. U.S.A.">
        <title>Unique thrombin inhibition mechanism by anophelin, an anticoagulant from the malaria vector.</title>
        <authorList>
            <person name="Figueiredo A.C."/>
            <person name="de Sanctis D."/>
            <person name="Gutierrez-Gallego R."/>
            <person name="Cereija T.B."/>
            <person name="Macedo-Ribeiro S."/>
            <person name="Fuentes-Prior P."/>
            <person name="Pereira P.J."/>
        </authorList>
    </citation>
    <scope>FUNCTION</scope>
</reference>
<reference evidence="13" key="6">
    <citation type="journal article" date="2017" name="J. Biol. Chem.">
        <title>Functional analyses yield detailed insight into the mechanism of thrombin inhibition by the antihemostatic salivary protein cE5 from Anopheles gambiae.</title>
        <authorList>
            <person name="Pirone L."/>
            <person name="Ripoll-Rozada J."/>
            <person name="Leone M."/>
            <person name="Ronca R."/>
            <person name="Lombardo F."/>
            <person name="Fiorentino G."/>
            <person name="Andersen J.F."/>
            <person name="Pereira P.J.B."/>
            <person name="Arca B."/>
            <person name="Pedone E."/>
        </authorList>
    </citation>
    <scope>X-RAY CRYSTALLOGRAPHY (1.45 ANGSTROMS) OF 22-103</scope>
    <scope>FUNCTION</scope>
    <scope>INTERACTION WITH HOST THROMBIN</scope>
    <scope>REGIONS</scope>
</reference>
<dbReference type="EMBL" id="AAAB01008964">
    <property type="protein sequence ID" value="EAA12433.3"/>
    <property type="molecule type" value="Genomic_DNA"/>
</dbReference>
<dbReference type="EMBL" id="Y17717">
    <property type="protein sequence ID" value="CAA76832.1"/>
    <property type="molecule type" value="mRNA"/>
</dbReference>
<dbReference type="RefSeq" id="XP_317463.3">
    <property type="nucleotide sequence ID" value="XM_317463.4"/>
</dbReference>
<dbReference type="PDB" id="5NHU">
    <property type="method" value="X-ray"/>
    <property type="resolution" value="1.45 A"/>
    <property type="chains" value="I/J/K=22-103"/>
</dbReference>
<dbReference type="PDBsum" id="5NHU"/>
<dbReference type="SMR" id="Q7Q3R9"/>
<dbReference type="MEROPS" id="I77.001"/>
<dbReference type="PaxDb" id="7165-AGAP008004-PA"/>
<dbReference type="EnsemblMetazoa" id="AGAP008004-RA">
    <property type="protein sequence ID" value="AGAP008004-PA"/>
    <property type="gene ID" value="AGAP008004"/>
</dbReference>
<dbReference type="KEGG" id="aga:1277947"/>
<dbReference type="VEuPathDB" id="VectorBase:AGAMI1_011479"/>
<dbReference type="VEuPathDB" id="VectorBase:AGAP008004"/>
<dbReference type="HOGENOM" id="CLU_2265951_0_0_1"/>
<dbReference type="InParanoid" id="Q7Q3R9"/>
<dbReference type="OMA" id="NHADTED"/>
<dbReference type="Proteomes" id="UP000007062">
    <property type="component" value="Chromosome 3R"/>
</dbReference>
<dbReference type="GO" id="GO:0005576">
    <property type="term" value="C:extracellular region"/>
    <property type="evidence" value="ECO:0007669"/>
    <property type="project" value="UniProtKB-SubCell"/>
</dbReference>
<dbReference type="GO" id="GO:0140678">
    <property type="term" value="F:molecular function inhibitor activity"/>
    <property type="evidence" value="ECO:0000269"/>
    <property type="project" value="DisProt"/>
</dbReference>
<dbReference type="GO" id="GO:0090729">
    <property type="term" value="F:toxin activity"/>
    <property type="evidence" value="ECO:0007669"/>
    <property type="project" value="UniProtKB-KW"/>
</dbReference>
<dbReference type="DisProt" id="DP01832"/>
<dbReference type="InterPro" id="IPR018932">
    <property type="entry name" value="Thrombin_inhibitor_anophelin"/>
</dbReference>
<dbReference type="Pfam" id="PF10731">
    <property type="entry name" value="Anophelin"/>
    <property type="match status" value="1"/>
</dbReference>
<protein>
    <recommendedName>
        <fullName evidence="9">Salivary thrombin inhibitor anophelin</fullName>
    </recommendedName>
    <alternativeName>
        <fullName evidence="6 7 8">cE5</fullName>
    </alternativeName>
</protein>